<proteinExistence type="inferred from homology"/>
<reference key="1">
    <citation type="journal article" date="2009" name="J. Bacteriol.">
        <title>Complete genome sequence and comparative genome analysis of enteropathogenic Escherichia coli O127:H6 strain E2348/69.</title>
        <authorList>
            <person name="Iguchi A."/>
            <person name="Thomson N.R."/>
            <person name="Ogura Y."/>
            <person name="Saunders D."/>
            <person name="Ooka T."/>
            <person name="Henderson I.R."/>
            <person name="Harris D."/>
            <person name="Asadulghani M."/>
            <person name="Kurokawa K."/>
            <person name="Dean P."/>
            <person name="Kenny B."/>
            <person name="Quail M.A."/>
            <person name="Thurston S."/>
            <person name="Dougan G."/>
            <person name="Hayashi T."/>
            <person name="Parkhill J."/>
            <person name="Frankel G."/>
        </authorList>
    </citation>
    <scope>NUCLEOTIDE SEQUENCE [LARGE SCALE GENOMIC DNA]</scope>
    <source>
        <strain>E2348/69 / EPEC</strain>
    </source>
</reference>
<gene>
    <name evidence="1" type="primary">rpmA</name>
    <name type="ordered locus">E2348C_3464</name>
</gene>
<dbReference type="EMBL" id="FM180568">
    <property type="protein sequence ID" value="CAS11012.1"/>
    <property type="molecule type" value="Genomic_DNA"/>
</dbReference>
<dbReference type="RefSeq" id="WP_000940595.1">
    <property type="nucleotide sequence ID" value="NC_011601.1"/>
</dbReference>
<dbReference type="SMR" id="B7UJ78"/>
<dbReference type="GeneID" id="93778796"/>
<dbReference type="KEGG" id="ecg:E2348C_3464"/>
<dbReference type="HOGENOM" id="CLU_095424_4_1_6"/>
<dbReference type="Proteomes" id="UP000008205">
    <property type="component" value="Chromosome"/>
</dbReference>
<dbReference type="GO" id="GO:0022625">
    <property type="term" value="C:cytosolic large ribosomal subunit"/>
    <property type="evidence" value="ECO:0007669"/>
    <property type="project" value="TreeGrafter"/>
</dbReference>
<dbReference type="GO" id="GO:0003735">
    <property type="term" value="F:structural constituent of ribosome"/>
    <property type="evidence" value="ECO:0007669"/>
    <property type="project" value="InterPro"/>
</dbReference>
<dbReference type="GO" id="GO:0006412">
    <property type="term" value="P:translation"/>
    <property type="evidence" value="ECO:0007669"/>
    <property type="project" value="UniProtKB-UniRule"/>
</dbReference>
<dbReference type="FunFam" id="2.40.50.100:FF:000001">
    <property type="entry name" value="50S ribosomal protein L27"/>
    <property type="match status" value="1"/>
</dbReference>
<dbReference type="Gene3D" id="2.40.50.100">
    <property type="match status" value="1"/>
</dbReference>
<dbReference type="HAMAP" id="MF_00539">
    <property type="entry name" value="Ribosomal_bL27"/>
    <property type="match status" value="1"/>
</dbReference>
<dbReference type="InterPro" id="IPR001684">
    <property type="entry name" value="Ribosomal_bL27"/>
</dbReference>
<dbReference type="InterPro" id="IPR018261">
    <property type="entry name" value="Ribosomal_bL27_CS"/>
</dbReference>
<dbReference type="NCBIfam" id="TIGR00062">
    <property type="entry name" value="L27"/>
    <property type="match status" value="1"/>
</dbReference>
<dbReference type="PANTHER" id="PTHR15893:SF0">
    <property type="entry name" value="LARGE RIBOSOMAL SUBUNIT PROTEIN BL27M"/>
    <property type="match status" value="1"/>
</dbReference>
<dbReference type="PANTHER" id="PTHR15893">
    <property type="entry name" value="RIBOSOMAL PROTEIN L27"/>
    <property type="match status" value="1"/>
</dbReference>
<dbReference type="Pfam" id="PF01016">
    <property type="entry name" value="Ribosomal_L27"/>
    <property type="match status" value="1"/>
</dbReference>
<dbReference type="PRINTS" id="PR00063">
    <property type="entry name" value="RIBOSOMALL27"/>
</dbReference>
<dbReference type="SUPFAM" id="SSF110324">
    <property type="entry name" value="Ribosomal L27 protein-like"/>
    <property type="match status" value="1"/>
</dbReference>
<dbReference type="PROSITE" id="PS00831">
    <property type="entry name" value="RIBOSOMAL_L27"/>
    <property type="match status" value="1"/>
</dbReference>
<comment type="similarity">
    <text evidence="1">Belongs to the bacterial ribosomal protein bL27 family.</text>
</comment>
<protein>
    <recommendedName>
        <fullName evidence="1">Large ribosomal subunit protein bL27</fullName>
    </recommendedName>
    <alternativeName>
        <fullName evidence="3">50S ribosomal protein L27</fullName>
    </alternativeName>
</protein>
<accession>B7UJ78</accession>
<keyword id="KW-1185">Reference proteome</keyword>
<keyword id="KW-0687">Ribonucleoprotein</keyword>
<keyword id="KW-0689">Ribosomal protein</keyword>
<evidence type="ECO:0000255" key="1">
    <source>
        <dbReference type="HAMAP-Rule" id="MF_00539"/>
    </source>
</evidence>
<evidence type="ECO:0000256" key="2">
    <source>
        <dbReference type="SAM" id="MobiDB-lite"/>
    </source>
</evidence>
<evidence type="ECO:0000305" key="3"/>
<organism>
    <name type="scientific">Escherichia coli O127:H6 (strain E2348/69 / EPEC)</name>
    <dbReference type="NCBI Taxonomy" id="574521"/>
    <lineage>
        <taxon>Bacteria</taxon>
        <taxon>Pseudomonadati</taxon>
        <taxon>Pseudomonadota</taxon>
        <taxon>Gammaproteobacteria</taxon>
        <taxon>Enterobacterales</taxon>
        <taxon>Enterobacteriaceae</taxon>
        <taxon>Escherichia</taxon>
    </lineage>
</organism>
<name>RL27_ECO27</name>
<feature type="chain" id="PRO_1000146529" description="Large ribosomal subunit protein bL27">
    <location>
        <begin position="1"/>
        <end position="85"/>
    </location>
</feature>
<feature type="region of interest" description="Disordered" evidence="2">
    <location>
        <begin position="1"/>
        <end position="20"/>
    </location>
</feature>
<sequence>MAHKKAGGSTRNGRDSEAKRLGVKRFGGESVLAGSIIVRQRGTKFHAGANVGCGRDHTLFAKADGKVKFEVKGPKNRKFISIEAE</sequence>